<gene>
    <name type="primary">SPX6</name>
    <name type="ORF">OsI_26862</name>
</gene>
<reference key="1">
    <citation type="journal article" date="2005" name="PLoS Biol.">
        <title>The genomes of Oryza sativa: a history of duplications.</title>
        <authorList>
            <person name="Yu J."/>
            <person name="Wang J."/>
            <person name="Lin W."/>
            <person name="Li S."/>
            <person name="Li H."/>
            <person name="Zhou J."/>
            <person name="Ni P."/>
            <person name="Dong W."/>
            <person name="Hu S."/>
            <person name="Zeng C."/>
            <person name="Zhang J."/>
            <person name="Zhang Y."/>
            <person name="Li R."/>
            <person name="Xu Z."/>
            <person name="Li S."/>
            <person name="Li X."/>
            <person name="Zheng H."/>
            <person name="Cong L."/>
            <person name="Lin L."/>
            <person name="Yin J."/>
            <person name="Geng J."/>
            <person name="Li G."/>
            <person name="Shi J."/>
            <person name="Liu J."/>
            <person name="Lv H."/>
            <person name="Li J."/>
            <person name="Wang J."/>
            <person name="Deng Y."/>
            <person name="Ran L."/>
            <person name="Shi X."/>
            <person name="Wang X."/>
            <person name="Wu Q."/>
            <person name="Li C."/>
            <person name="Ren X."/>
            <person name="Wang J."/>
            <person name="Wang X."/>
            <person name="Li D."/>
            <person name="Liu D."/>
            <person name="Zhang X."/>
            <person name="Ji Z."/>
            <person name="Zhao W."/>
            <person name="Sun Y."/>
            <person name="Zhang Z."/>
            <person name="Bao J."/>
            <person name="Han Y."/>
            <person name="Dong L."/>
            <person name="Ji J."/>
            <person name="Chen P."/>
            <person name="Wu S."/>
            <person name="Liu J."/>
            <person name="Xiao Y."/>
            <person name="Bu D."/>
            <person name="Tan J."/>
            <person name="Yang L."/>
            <person name="Ye C."/>
            <person name="Zhang J."/>
            <person name="Xu J."/>
            <person name="Zhou Y."/>
            <person name="Yu Y."/>
            <person name="Zhang B."/>
            <person name="Zhuang S."/>
            <person name="Wei H."/>
            <person name="Liu B."/>
            <person name="Lei M."/>
            <person name="Yu H."/>
            <person name="Li Y."/>
            <person name="Xu H."/>
            <person name="Wei S."/>
            <person name="He X."/>
            <person name="Fang L."/>
            <person name="Zhang Z."/>
            <person name="Zhang Y."/>
            <person name="Huang X."/>
            <person name="Su Z."/>
            <person name="Tong W."/>
            <person name="Li J."/>
            <person name="Tong Z."/>
            <person name="Li S."/>
            <person name="Ye J."/>
            <person name="Wang L."/>
            <person name="Fang L."/>
            <person name="Lei T."/>
            <person name="Chen C.-S."/>
            <person name="Chen H.-C."/>
            <person name="Xu Z."/>
            <person name="Li H."/>
            <person name="Huang H."/>
            <person name="Zhang F."/>
            <person name="Xu H."/>
            <person name="Li N."/>
            <person name="Zhao C."/>
            <person name="Li S."/>
            <person name="Dong L."/>
            <person name="Huang Y."/>
            <person name="Li L."/>
            <person name="Xi Y."/>
            <person name="Qi Q."/>
            <person name="Li W."/>
            <person name="Zhang B."/>
            <person name="Hu W."/>
            <person name="Zhang Y."/>
            <person name="Tian X."/>
            <person name="Jiao Y."/>
            <person name="Liang X."/>
            <person name="Jin J."/>
            <person name="Gao L."/>
            <person name="Zheng W."/>
            <person name="Hao B."/>
            <person name="Liu S.-M."/>
            <person name="Wang W."/>
            <person name="Yuan L."/>
            <person name="Cao M."/>
            <person name="McDermott J."/>
            <person name="Samudrala R."/>
            <person name="Wang J."/>
            <person name="Wong G.K.-S."/>
            <person name="Yang H."/>
        </authorList>
    </citation>
    <scope>NUCLEOTIDE SEQUENCE [LARGE SCALE GENOMIC DNA]</scope>
    <source>
        <strain>cv. 93-11</strain>
    </source>
</reference>
<accession>A2YNP0</accession>
<sequence>MKFGKLLKRQIEQSLPEWRDKFVSYKELKRIVASISGSPADEAAFVAALAADIDKIDSFFLEQEEEFVIRHRARTPIRFNSFELQEAIKKAAEAAAEVAGIRREIVDFHGEMVLLLSYSSINYIGVGKILKKHDKRTGGALAAPVAEAVRERRHFFKTETVSRMVRECEAMMAEAAVLPAEAAPEALAAAAEHGIFRNTVAALLTMEDVRRGSSTHGRHSLPPLTLPDSDWLRSFQPPSPIPIQ</sequence>
<name>SPX6_ORYSI</name>
<protein>
    <recommendedName>
        <fullName>SPX domain-containing protein 6</fullName>
    </recommendedName>
    <alternativeName>
        <fullName>Protein SPX DOMAIN GENE 6</fullName>
        <shortName>OsSPX6</shortName>
    </alternativeName>
</protein>
<organism>
    <name type="scientific">Oryza sativa subsp. indica</name>
    <name type="common">Rice</name>
    <dbReference type="NCBI Taxonomy" id="39946"/>
    <lineage>
        <taxon>Eukaryota</taxon>
        <taxon>Viridiplantae</taxon>
        <taxon>Streptophyta</taxon>
        <taxon>Embryophyta</taxon>
        <taxon>Tracheophyta</taxon>
        <taxon>Spermatophyta</taxon>
        <taxon>Magnoliopsida</taxon>
        <taxon>Liliopsida</taxon>
        <taxon>Poales</taxon>
        <taxon>Poaceae</taxon>
        <taxon>BOP clade</taxon>
        <taxon>Oryzoideae</taxon>
        <taxon>Oryzeae</taxon>
        <taxon>Oryzinae</taxon>
        <taxon>Oryza</taxon>
        <taxon>Oryza sativa</taxon>
    </lineage>
</organism>
<dbReference type="EMBL" id="CM000132">
    <property type="protein sequence ID" value="EAZ04701.1"/>
    <property type="molecule type" value="Genomic_DNA"/>
</dbReference>
<dbReference type="SMR" id="A2YNP0"/>
<dbReference type="STRING" id="39946.A2YNP0"/>
<dbReference type="EnsemblPlants" id="BGIOSGA023907-TA">
    <property type="protein sequence ID" value="BGIOSGA023907-PA"/>
    <property type="gene ID" value="BGIOSGA023907"/>
</dbReference>
<dbReference type="Gramene" id="BGIOSGA023907-TA">
    <property type="protein sequence ID" value="BGIOSGA023907-PA"/>
    <property type="gene ID" value="BGIOSGA023907"/>
</dbReference>
<dbReference type="HOGENOM" id="CLU_057600_1_0_1"/>
<dbReference type="OMA" id="ECEAMMA"/>
<dbReference type="Proteomes" id="UP000007015">
    <property type="component" value="Chromosome 7"/>
</dbReference>
<dbReference type="GO" id="GO:0070417">
    <property type="term" value="P:cellular response to cold"/>
    <property type="evidence" value="ECO:0007669"/>
    <property type="project" value="EnsemblPlants"/>
</dbReference>
<dbReference type="GO" id="GO:0016036">
    <property type="term" value="P:cellular response to phosphate starvation"/>
    <property type="evidence" value="ECO:0007669"/>
    <property type="project" value="InterPro"/>
</dbReference>
<dbReference type="CDD" id="cd14481">
    <property type="entry name" value="SPX_AtSPX1_like"/>
    <property type="match status" value="1"/>
</dbReference>
<dbReference type="InterPro" id="IPR004331">
    <property type="entry name" value="SPX_dom"/>
</dbReference>
<dbReference type="InterPro" id="IPR031142">
    <property type="entry name" value="SPX_prot"/>
</dbReference>
<dbReference type="PANTHER" id="PTHR45978">
    <property type="entry name" value="SPX DOMAIN-CONTAINING PROTEIN 3"/>
    <property type="match status" value="1"/>
</dbReference>
<dbReference type="PANTHER" id="PTHR45978:SF4">
    <property type="entry name" value="SPX DOMAIN-CONTAINING PROTEIN 6"/>
    <property type="match status" value="1"/>
</dbReference>
<dbReference type="Pfam" id="PF03105">
    <property type="entry name" value="SPX"/>
    <property type="match status" value="2"/>
</dbReference>
<dbReference type="PROSITE" id="PS51382">
    <property type="entry name" value="SPX"/>
    <property type="match status" value="1"/>
</dbReference>
<feature type="chain" id="PRO_0000398356" description="SPX domain-containing protein 6">
    <location>
        <begin position="1"/>
        <end position="244"/>
    </location>
</feature>
<feature type="domain" description="SPX" evidence="1">
    <location>
        <begin position="1"/>
        <end position="147"/>
    </location>
</feature>
<feature type="region of interest" description="Disordered" evidence="2">
    <location>
        <begin position="212"/>
        <end position="244"/>
    </location>
</feature>
<proteinExistence type="predicted"/>
<keyword id="KW-1185">Reference proteome</keyword>
<evidence type="ECO:0000255" key="1">
    <source>
        <dbReference type="PROSITE-ProRule" id="PRU00714"/>
    </source>
</evidence>
<evidence type="ECO:0000256" key="2">
    <source>
        <dbReference type="SAM" id="MobiDB-lite"/>
    </source>
</evidence>